<sequence>MTTETRSLYSQLPAIDRLLRDSSFLSLRDTYGHTRVVELLRQMLDEAREVIRDSQTLPAWCENWAQEVDARLTKEAQSALRPVINLTGTVLHTNLGRALQAEAAVEAVAQAMRSPVTLEYDLDDAGRGHRDRALAQLLCRITGAEDACIVNNNAAAVLLMLAATASGKEVVVSRGELVEIGGAFRIPDVMRQAGCTLHEVGTTNRTHANDYRQAVNENTALLMKVHTSNYSIQGFTKAIDEAELVALGKELDIPVVTDLGSGSLVDLSQYGLPKEPMPQELIAAGVSLVSFSGDKLLGGPQAGIIVGKKEMIARLQSHPLKRALRADKMTLAALEATVRLYLHPEALSEKLPTLRLLTRSAEVIQIQAQRLQAPLAAHYGAEFAVQVMPCLSQIGSGSLPVDRLPSAALTFTPHDGRGSHLESLAARWRELPVPVIGRIYDGRLWLDLRCLEDEQRFLEMLLK</sequence>
<comment type="function">
    <text evidence="1">Converts seryl-tRNA(Sec) to selenocysteinyl-tRNA(Sec) required for selenoprotein biosynthesis.</text>
</comment>
<comment type="catalytic activity">
    <reaction evidence="1">
        <text>L-seryl-tRNA(Sec) + selenophosphate + H(+) = L-selenocysteinyl-tRNA(Sec) + phosphate</text>
        <dbReference type="Rhea" id="RHEA:22728"/>
        <dbReference type="Rhea" id="RHEA-COMP:9742"/>
        <dbReference type="Rhea" id="RHEA-COMP:9743"/>
        <dbReference type="ChEBI" id="CHEBI:15378"/>
        <dbReference type="ChEBI" id="CHEBI:16144"/>
        <dbReference type="ChEBI" id="CHEBI:43474"/>
        <dbReference type="ChEBI" id="CHEBI:78533"/>
        <dbReference type="ChEBI" id="CHEBI:78573"/>
        <dbReference type="EC" id="2.9.1.1"/>
    </reaction>
</comment>
<comment type="cofactor">
    <cofactor evidence="1">
        <name>pyridoxal 5'-phosphate</name>
        <dbReference type="ChEBI" id="CHEBI:597326"/>
    </cofactor>
</comment>
<comment type="pathway">
    <text evidence="1">Aminoacyl-tRNA biosynthesis; selenocysteinyl-tRNA(Sec) biosynthesis; selenocysteinyl-tRNA(Sec) from L-seryl-tRNA(Sec) (bacterial route): step 1/1.</text>
</comment>
<comment type="subunit">
    <text evidence="1">Homodecamer; pentamer of dimers. Binds only one seryl-tRNA(Sec) per dimer.</text>
</comment>
<comment type="subcellular location">
    <subcellularLocation>
        <location evidence="1">Cytoplasm</location>
    </subcellularLocation>
</comment>
<comment type="similarity">
    <text evidence="1">Belongs to the SelA family.</text>
</comment>
<gene>
    <name evidence="1" type="primary">selA</name>
    <name type="ordered locus">ECUMN_4106</name>
</gene>
<proteinExistence type="inferred from homology"/>
<evidence type="ECO:0000255" key="1">
    <source>
        <dbReference type="HAMAP-Rule" id="MF_00423"/>
    </source>
</evidence>
<protein>
    <recommendedName>
        <fullName evidence="1">L-seryl-tRNA(Sec) selenium transferase</fullName>
        <ecNumber evidence="1">2.9.1.1</ecNumber>
    </recommendedName>
    <alternativeName>
        <fullName evidence="1">Selenocysteine synthase</fullName>
        <shortName evidence="1">Sec synthase</shortName>
    </alternativeName>
    <alternativeName>
        <fullName evidence="1">Selenocysteinyl-tRNA(Sec) synthase</fullName>
    </alternativeName>
</protein>
<keyword id="KW-0963">Cytoplasm</keyword>
<keyword id="KW-0648">Protein biosynthesis</keyword>
<keyword id="KW-0663">Pyridoxal phosphate</keyword>
<keyword id="KW-0711">Selenium</keyword>
<keyword id="KW-0808">Transferase</keyword>
<feature type="chain" id="PRO_1000124141" description="L-seryl-tRNA(Sec) selenium transferase">
    <location>
        <begin position="1"/>
        <end position="463"/>
    </location>
</feature>
<feature type="modified residue" description="N6-(pyridoxal phosphate)lysine" evidence="1">
    <location>
        <position position="295"/>
    </location>
</feature>
<organism>
    <name type="scientific">Escherichia coli O17:K52:H18 (strain UMN026 / ExPEC)</name>
    <dbReference type="NCBI Taxonomy" id="585056"/>
    <lineage>
        <taxon>Bacteria</taxon>
        <taxon>Pseudomonadati</taxon>
        <taxon>Pseudomonadota</taxon>
        <taxon>Gammaproteobacteria</taxon>
        <taxon>Enterobacterales</taxon>
        <taxon>Enterobacteriaceae</taxon>
        <taxon>Escherichia</taxon>
    </lineage>
</organism>
<name>SELA_ECOLU</name>
<reference key="1">
    <citation type="journal article" date="2009" name="PLoS Genet.">
        <title>Organised genome dynamics in the Escherichia coli species results in highly diverse adaptive paths.</title>
        <authorList>
            <person name="Touchon M."/>
            <person name="Hoede C."/>
            <person name="Tenaillon O."/>
            <person name="Barbe V."/>
            <person name="Baeriswyl S."/>
            <person name="Bidet P."/>
            <person name="Bingen E."/>
            <person name="Bonacorsi S."/>
            <person name="Bouchier C."/>
            <person name="Bouvet O."/>
            <person name="Calteau A."/>
            <person name="Chiapello H."/>
            <person name="Clermont O."/>
            <person name="Cruveiller S."/>
            <person name="Danchin A."/>
            <person name="Diard M."/>
            <person name="Dossat C."/>
            <person name="Karoui M.E."/>
            <person name="Frapy E."/>
            <person name="Garry L."/>
            <person name="Ghigo J.M."/>
            <person name="Gilles A.M."/>
            <person name="Johnson J."/>
            <person name="Le Bouguenec C."/>
            <person name="Lescat M."/>
            <person name="Mangenot S."/>
            <person name="Martinez-Jehanne V."/>
            <person name="Matic I."/>
            <person name="Nassif X."/>
            <person name="Oztas S."/>
            <person name="Petit M.A."/>
            <person name="Pichon C."/>
            <person name="Rouy Z."/>
            <person name="Ruf C.S."/>
            <person name="Schneider D."/>
            <person name="Tourret J."/>
            <person name="Vacherie B."/>
            <person name="Vallenet D."/>
            <person name="Medigue C."/>
            <person name="Rocha E.P.C."/>
            <person name="Denamur E."/>
        </authorList>
    </citation>
    <scope>NUCLEOTIDE SEQUENCE [LARGE SCALE GENOMIC DNA]</scope>
    <source>
        <strain>UMN026 / ExPEC</strain>
    </source>
</reference>
<dbReference type="EC" id="2.9.1.1" evidence="1"/>
<dbReference type="EMBL" id="CU928163">
    <property type="protein sequence ID" value="CAR15247.1"/>
    <property type="molecule type" value="Genomic_DNA"/>
</dbReference>
<dbReference type="RefSeq" id="WP_000206242.1">
    <property type="nucleotide sequence ID" value="NC_011751.1"/>
</dbReference>
<dbReference type="RefSeq" id="YP_002414747.1">
    <property type="nucleotide sequence ID" value="NC_011751.1"/>
</dbReference>
<dbReference type="SMR" id="B7NEP6"/>
<dbReference type="STRING" id="585056.ECUMN_4106"/>
<dbReference type="KEGG" id="eum:ECUMN_4106"/>
<dbReference type="PATRIC" id="fig|585056.7.peg.4279"/>
<dbReference type="HOGENOM" id="CLU_038142_1_0_6"/>
<dbReference type="UniPathway" id="UPA00906">
    <property type="reaction ID" value="UER00896"/>
</dbReference>
<dbReference type="Proteomes" id="UP000007097">
    <property type="component" value="Chromosome"/>
</dbReference>
<dbReference type="GO" id="GO:0005737">
    <property type="term" value="C:cytoplasm"/>
    <property type="evidence" value="ECO:0007669"/>
    <property type="project" value="UniProtKB-SubCell"/>
</dbReference>
<dbReference type="GO" id="GO:0004125">
    <property type="term" value="F:L-seryl-tRNA(Sec) selenium transferase activity"/>
    <property type="evidence" value="ECO:0007669"/>
    <property type="project" value="UniProtKB-UniRule"/>
</dbReference>
<dbReference type="GO" id="GO:0001717">
    <property type="term" value="P:conversion of seryl-tRNAsec to selenocys-tRNAsec"/>
    <property type="evidence" value="ECO:0007669"/>
    <property type="project" value="UniProtKB-UniRule"/>
</dbReference>
<dbReference type="GO" id="GO:0001514">
    <property type="term" value="P:selenocysteine incorporation"/>
    <property type="evidence" value="ECO:0007669"/>
    <property type="project" value="UniProtKB-UniRule"/>
</dbReference>
<dbReference type="FunFam" id="3.40.640.10:FF:000028">
    <property type="entry name" value="L-seryl-tRNA(Sec) selenium transferase"/>
    <property type="match status" value="1"/>
</dbReference>
<dbReference type="FunFam" id="3.90.1150.180:FF:000001">
    <property type="entry name" value="L-seryl-tRNA(Sec) selenium transferase"/>
    <property type="match status" value="1"/>
</dbReference>
<dbReference type="Gene3D" id="3.90.1150.180">
    <property type="match status" value="1"/>
</dbReference>
<dbReference type="Gene3D" id="3.40.640.10">
    <property type="entry name" value="Type I PLP-dependent aspartate aminotransferase-like (Major domain)"/>
    <property type="match status" value="1"/>
</dbReference>
<dbReference type="HAMAP" id="MF_00423">
    <property type="entry name" value="SelA"/>
    <property type="match status" value="1"/>
</dbReference>
<dbReference type="InterPro" id="IPR015424">
    <property type="entry name" value="PyrdxlP-dep_Trfase"/>
</dbReference>
<dbReference type="InterPro" id="IPR015421">
    <property type="entry name" value="PyrdxlP-dep_Trfase_major"/>
</dbReference>
<dbReference type="InterPro" id="IPR018319">
    <property type="entry name" value="SelA-like"/>
</dbReference>
<dbReference type="InterPro" id="IPR004534">
    <property type="entry name" value="SelA_trans"/>
</dbReference>
<dbReference type="InterPro" id="IPR025862">
    <property type="entry name" value="SelA_trans_N_dom"/>
</dbReference>
<dbReference type="NCBIfam" id="TIGR00474">
    <property type="entry name" value="selA"/>
    <property type="match status" value="1"/>
</dbReference>
<dbReference type="PANTHER" id="PTHR32328">
    <property type="entry name" value="L-SERYL-TRNA(SEC) SELENIUM TRANSFERASE"/>
    <property type="match status" value="1"/>
</dbReference>
<dbReference type="PANTHER" id="PTHR32328:SF0">
    <property type="entry name" value="L-SERYL-TRNA(SEC) SELENIUM TRANSFERASE"/>
    <property type="match status" value="1"/>
</dbReference>
<dbReference type="Pfam" id="PF12390">
    <property type="entry name" value="Se-cys_synth_N"/>
    <property type="match status" value="1"/>
</dbReference>
<dbReference type="Pfam" id="PF03841">
    <property type="entry name" value="SelA"/>
    <property type="match status" value="1"/>
</dbReference>
<dbReference type="SUPFAM" id="SSF53383">
    <property type="entry name" value="PLP-dependent transferases"/>
    <property type="match status" value="1"/>
</dbReference>
<accession>B7NEP6</accession>